<comment type="function">
    <text evidence="1">Guanylate cyclase involved in the production of the second messenger cGMP (By similarity).</text>
</comment>
<comment type="catalytic activity">
    <reaction evidence="1">
        <text>GTP = 3',5'-cyclic GMP + diphosphate</text>
        <dbReference type="Rhea" id="RHEA:13665"/>
        <dbReference type="ChEBI" id="CHEBI:33019"/>
        <dbReference type="ChEBI" id="CHEBI:37565"/>
        <dbReference type="ChEBI" id="CHEBI:57746"/>
        <dbReference type="EC" id="4.6.1.2"/>
    </reaction>
</comment>
<comment type="subcellular location">
    <subcellularLocation>
        <location evidence="8">Cell membrane</location>
        <topology evidence="8">Single-pass type I membrane protein</topology>
    </subcellularLocation>
</comment>
<comment type="tissue specificity">
    <text evidence="7">Expressed bilaterally in RIM interneurons.</text>
</comment>
<comment type="domain">
    <text evidence="4">The protein kinase domain is predicted to be catalytically inactive.</text>
</comment>
<comment type="similarity">
    <text evidence="3">Belongs to the adenylyl cyclase class-4/guanylyl cyclase family.</text>
</comment>
<dbReference type="EC" id="4.6.1.2" evidence="1"/>
<dbReference type="EMBL" id="BX284605">
    <property type="protein sequence ID" value="CAA98947.3"/>
    <property type="molecule type" value="Genomic_DNA"/>
</dbReference>
<dbReference type="RefSeq" id="NP_506097.3">
    <property type="nucleotide sequence ID" value="NM_073696.3"/>
</dbReference>
<dbReference type="SMR" id="Q19768"/>
<dbReference type="FunCoup" id="Q19768">
    <property type="interactions" value="116"/>
</dbReference>
<dbReference type="STRING" id="6239.F23H12.6.1"/>
<dbReference type="GlyCosmos" id="Q19768">
    <property type="glycosylation" value="6 sites, No reported glycans"/>
</dbReference>
<dbReference type="PaxDb" id="6239-F23H12.6"/>
<dbReference type="EnsemblMetazoa" id="F23H12.6.1">
    <property type="protein sequence ID" value="F23H12.6.1"/>
    <property type="gene ID" value="WBGene00001539"/>
</dbReference>
<dbReference type="GeneID" id="191646"/>
<dbReference type="KEGG" id="cel:CELE_F23H12.6"/>
<dbReference type="UCSC" id="F23H12.6">
    <property type="organism name" value="c. elegans"/>
</dbReference>
<dbReference type="AGR" id="WB:WBGene00001539"/>
<dbReference type="CTD" id="191646"/>
<dbReference type="WormBase" id="F23H12.6">
    <property type="protein sequence ID" value="CE45651"/>
    <property type="gene ID" value="WBGene00001539"/>
    <property type="gene designation" value="gcy-13"/>
</dbReference>
<dbReference type="eggNOG" id="KOG1023">
    <property type="taxonomic scope" value="Eukaryota"/>
</dbReference>
<dbReference type="HOGENOM" id="CLU_001072_1_3_1"/>
<dbReference type="InParanoid" id="Q19768"/>
<dbReference type="OMA" id="WVDWSEN"/>
<dbReference type="OrthoDB" id="302535at2759"/>
<dbReference type="PhylomeDB" id="Q19768"/>
<dbReference type="Reactome" id="R-CEL-2514859">
    <property type="pathway name" value="Inactivation, recovery and regulation of the phototransduction cascade"/>
</dbReference>
<dbReference type="PRO" id="PR:Q19768"/>
<dbReference type="Proteomes" id="UP000001940">
    <property type="component" value="Chromosome V"/>
</dbReference>
<dbReference type="GO" id="GO:0005886">
    <property type="term" value="C:plasma membrane"/>
    <property type="evidence" value="ECO:0000318"/>
    <property type="project" value="GO_Central"/>
</dbReference>
<dbReference type="GO" id="GO:0005524">
    <property type="term" value="F:ATP binding"/>
    <property type="evidence" value="ECO:0007669"/>
    <property type="project" value="InterPro"/>
</dbReference>
<dbReference type="GO" id="GO:0005525">
    <property type="term" value="F:GTP binding"/>
    <property type="evidence" value="ECO:0007669"/>
    <property type="project" value="UniProtKB-KW"/>
</dbReference>
<dbReference type="GO" id="GO:0004383">
    <property type="term" value="F:guanylate cyclase activity"/>
    <property type="evidence" value="ECO:0000318"/>
    <property type="project" value="GO_Central"/>
</dbReference>
<dbReference type="GO" id="GO:0001653">
    <property type="term" value="F:peptide receptor activity"/>
    <property type="evidence" value="ECO:0000318"/>
    <property type="project" value="GO_Central"/>
</dbReference>
<dbReference type="GO" id="GO:0004672">
    <property type="term" value="F:protein kinase activity"/>
    <property type="evidence" value="ECO:0007669"/>
    <property type="project" value="InterPro"/>
</dbReference>
<dbReference type="GO" id="GO:0006182">
    <property type="term" value="P:cGMP biosynthetic process"/>
    <property type="evidence" value="ECO:0000318"/>
    <property type="project" value="GO_Central"/>
</dbReference>
<dbReference type="GO" id="GO:0035556">
    <property type="term" value="P:intracellular signal transduction"/>
    <property type="evidence" value="ECO:0007669"/>
    <property type="project" value="InterPro"/>
</dbReference>
<dbReference type="GO" id="GO:0007168">
    <property type="term" value="P:receptor guanylyl cyclase signaling pathway"/>
    <property type="evidence" value="ECO:0000318"/>
    <property type="project" value="GO_Central"/>
</dbReference>
<dbReference type="CDD" id="cd07302">
    <property type="entry name" value="CHD"/>
    <property type="match status" value="1"/>
</dbReference>
<dbReference type="CDD" id="cd06352">
    <property type="entry name" value="PBP1_NPR_GC-like"/>
    <property type="match status" value="1"/>
</dbReference>
<dbReference type="FunFam" id="1.10.510.10:FF:001284">
    <property type="entry name" value="Guanylate cyclase"/>
    <property type="match status" value="1"/>
</dbReference>
<dbReference type="FunFam" id="3.30.70.1230:FF:000119">
    <property type="entry name" value="Guanylate cyclase"/>
    <property type="match status" value="1"/>
</dbReference>
<dbReference type="FunFam" id="3.40.50.2300:FF:000241">
    <property type="entry name" value="Guanylate cyclase"/>
    <property type="match status" value="1"/>
</dbReference>
<dbReference type="Gene3D" id="3.40.50.2300">
    <property type="match status" value="2"/>
</dbReference>
<dbReference type="Gene3D" id="6.10.250.780">
    <property type="match status" value="1"/>
</dbReference>
<dbReference type="Gene3D" id="3.30.70.1230">
    <property type="entry name" value="Nucleotide cyclase"/>
    <property type="match status" value="1"/>
</dbReference>
<dbReference type="Gene3D" id="1.10.510.10">
    <property type="entry name" value="Transferase(Phosphotransferase) domain 1"/>
    <property type="match status" value="1"/>
</dbReference>
<dbReference type="InterPro" id="IPR001054">
    <property type="entry name" value="A/G_cyclase"/>
</dbReference>
<dbReference type="InterPro" id="IPR018297">
    <property type="entry name" value="A/G_cyclase_CS"/>
</dbReference>
<dbReference type="InterPro" id="IPR001828">
    <property type="entry name" value="ANF_lig-bd_rcpt"/>
</dbReference>
<dbReference type="InterPro" id="IPR001170">
    <property type="entry name" value="ANPR/GUC"/>
</dbReference>
<dbReference type="InterPro" id="IPR050401">
    <property type="entry name" value="Cyclic_nucleotide_synthase"/>
</dbReference>
<dbReference type="InterPro" id="IPR011645">
    <property type="entry name" value="HNOB_dom_associated"/>
</dbReference>
<dbReference type="InterPro" id="IPR011009">
    <property type="entry name" value="Kinase-like_dom_sf"/>
</dbReference>
<dbReference type="InterPro" id="IPR029787">
    <property type="entry name" value="Nucleotide_cyclase"/>
</dbReference>
<dbReference type="InterPro" id="IPR028082">
    <property type="entry name" value="Peripla_BP_I"/>
</dbReference>
<dbReference type="InterPro" id="IPR000719">
    <property type="entry name" value="Prot_kinase_dom"/>
</dbReference>
<dbReference type="InterPro" id="IPR001245">
    <property type="entry name" value="Ser-Thr/Tyr_kinase_cat_dom"/>
</dbReference>
<dbReference type="PANTHER" id="PTHR11920">
    <property type="entry name" value="GUANYLYL CYCLASE"/>
    <property type="match status" value="1"/>
</dbReference>
<dbReference type="PANTHER" id="PTHR11920:SF375">
    <property type="entry name" value="RECEPTOR-TYPE GUANYLATE CYCLASE GCY-13"/>
    <property type="match status" value="1"/>
</dbReference>
<dbReference type="Pfam" id="PF01094">
    <property type="entry name" value="ANF_receptor"/>
    <property type="match status" value="1"/>
</dbReference>
<dbReference type="Pfam" id="PF00211">
    <property type="entry name" value="Guanylate_cyc"/>
    <property type="match status" value="1"/>
</dbReference>
<dbReference type="Pfam" id="PF07701">
    <property type="entry name" value="HNOBA"/>
    <property type="match status" value="1"/>
</dbReference>
<dbReference type="Pfam" id="PF07714">
    <property type="entry name" value="PK_Tyr_Ser-Thr"/>
    <property type="match status" value="1"/>
</dbReference>
<dbReference type="PRINTS" id="PR00255">
    <property type="entry name" value="NATPEPTIDER"/>
</dbReference>
<dbReference type="SMART" id="SM00044">
    <property type="entry name" value="CYCc"/>
    <property type="match status" value="1"/>
</dbReference>
<dbReference type="SUPFAM" id="SSF55073">
    <property type="entry name" value="Nucleotide cyclase"/>
    <property type="match status" value="1"/>
</dbReference>
<dbReference type="SUPFAM" id="SSF53822">
    <property type="entry name" value="Periplasmic binding protein-like I"/>
    <property type="match status" value="1"/>
</dbReference>
<dbReference type="SUPFAM" id="SSF56112">
    <property type="entry name" value="Protein kinase-like (PK-like)"/>
    <property type="match status" value="1"/>
</dbReference>
<dbReference type="PROSITE" id="PS00452">
    <property type="entry name" value="GUANYLATE_CYCLASE_1"/>
    <property type="match status" value="1"/>
</dbReference>
<dbReference type="PROSITE" id="PS50125">
    <property type="entry name" value="GUANYLATE_CYCLASE_2"/>
    <property type="match status" value="1"/>
</dbReference>
<dbReference type="PROSITE" id="PS50011">
    <property type="entry name" value="PROTEIN_KINASE_DOM"/>
    <property type="match status" value="1"/>
</dbReference>
<evidence type="ECO:0000250" key="1">
    <source>
        <dbReference type="UniProtKB" id="Q19187"/>
    </source>
</evidence>
<evidence type="ECO:0000255" key="2"/>
<evidence type="ECO:0000255" key="3">
    <source>
        <dbReference type="PROSITE-ProRule" id="PRU00099"/>
    </source>
</evidence>
<evidence type="ECO:0000255" key="4">
    <source>
        <dbReference type="PROSITE-ProRule" id="PRU00159"/>
    </source>
</evidence>
<evidence type="ECO:0000255" key="5">
    <source>
        <dbReference type="PROSITE-ProRule" id="PRU00498"/>
    </source>
</evidence>
<evidence type="ECO:0000256" key="6">
    <source>
        <dbReference type="SAM" id="MobiDB-lite"/>
    </source>
</evidence>
<evidence type="ECO:0000269" key="7">
    <source>
    </source>
</evidence>
<evidence type="ECO:0000305" key="8"/>
<evidence type="ECO:0000312" key="9">
    <source>
        <dbReference type="Proteomes" id="UP000001940"/>
    </source>
</evidence>
<evidence type="ECO:0000312" key="10">
    <source>
        <dbReference type="WormBase" id="F23H12.6"/>
    </source>
</evidence>
<reference evidence="9" key="1">
    <citation type="journal article" date="1998" name="Science">
        <title>Genome sequence of the nematode C. elegans: a platform for investigating biology.</title>
        <authorList>
            <consortium name="The C. elegans sequencing consortium"/>
        </authorList>
    </citation>
    <scope>NUCLEOTIDE SEQUENCE [LARGE SCALE GENOMIC DNA]</scope>
    <source>
        <strain evidence="9">Bristol N2</strain>
    </source>
</reference>
<reference evidence="8" key="2">
    <citation type="journal article" date="2006" name="Genetics">
        <title>Searching for neuronal left/right asymmetry: genomewide analysis of nematode receptor-type guanylyl cyclases.</title>
        <authorList>
            <person name="Ortiz C.O."/>
            <person name="Etchberger J.F."/>
            <person name="Posy S.L."/>
            <person name="Frokjaer-Jensen C."/>
            <person name="Lockery S."/>
            <person name="Honig B."/>
            <person name="Hobert O."/>
        </authorList>
    </citation>
    <scope>TISSUE SPECIFICITY</scope>
</reference>
<name>GCY13_CAEEL</name>
<accession>Q19768</accession>
<keyword id="KW-1003">Cell membrane</keyword>
<keyword id="KW-0141">cGMP biosynthesis</keyword>
<keyword id="KW-0175">Coiled coil</keyword>
<keyword id="KW-0325">Glycoprotein</keyword>
<keyword id="KW-0342">GTP-binding</keyword>
<keyword id="KW-0456">Lyase</keyword>
<keyword id="KW-0472">Membrane</keyword>
<keyword id="KW-0547">Nucleotide-binding</keyword>
<keyword id="KW-0675">Receptor</keyword>
<keyword id="KW-1185">Reference proteome</keyword>
<keyword id="KW-0732">Signal</keyword>
<keyword id="KW-0812">Transmembrane</keyword>
<keyword id="KW-1133">Transmembrane helix</keyword>
<feature type="signal peptide" evidence="8">
    <location>
        <begin position="1"/>
        <end status="unknown"/>
    </location>
</feature>
<feature type="chain" id="PRO_0000433282" description="Receptor-type guanylate cyclase gcy-13" evidence="8">
    <location>
        <begin status="unknown"/>
        <end position="1028"/>
    </location>
</feature>
<feature type="topological domain" description="Extracellular" evidence="2">
    <location>
        <begin status="unknown"/>
        <end position="437"/>
    </location>
</feature>
<feature type="transmembrane region" description="Helical" evidence="2">
    <location>
        <begin position="438"/>
        <end position="458"/>
    </location>
</feature>
<feature type="topological domain" description="Cytoplasmic" evidence="2">
    <location>
        <begin position="459"/>
        <end position="1028"/>
    </location>
</feature>
<feature type="domain" description="Protein kinase" evidence="4">
    <location>
        <begin position="499"/>
        <end position="770"/>
    </location>
</feature>
<feature type="domain" description="Guanylate cyclase" evidence="3">
    <location>
        <begin position="844"/>
        <end position="974"/>
    </location>
</feature>
<feature type="region of interest" description="Disordered" evidence="6">
    <location>
        <begin position="491"/>
        <end position="511"/>
    </location>
</feature>
<feature type="coiled-coil region" evidence="2">
    <location>
        <begin position="786"/>
        <end position="817"/>
    </location>
</feature>
<feature type="compositionally biased region" description="Low complexity" evidence="6">
    <location>
        <begin position="497"/>
        <end position="511"/>
    </location>
</feature>
<feature type="glycosylation site" description="N-linked (GlcNAc...) asparagine" evidence="5">
    <location>
        <position position="58"/>
    </location>
</feature>
<feature type="glycosylation site" description="N-linked (GlcNAc...) asparagine" evidence="5">
    <location>
        <position position="156"/>
    </location>
</feature>
<feature type="glycosylation site" description="N-linked (GlcNAc...) asparagine" evidence="5">
    <location>
        <position position="324"/>
    </location>
</feature>
<feature type="glycosylation site" description="N-linked (GlcNAc...) asparagine" evidence="5">
    <location>
        <position position="337"/>
    </location>
</feature>
<feature type="glycosylation site" description="N-linked (GlcNAc...) asparagine" evidence="5">
    <location>
        <position position="377"/>
    </location>
</feature>
<feature type="glycosylation site" description="N-linked (GlcNAc...) asparagine" evidence="5">
    <location>
        <position position="394"/>
    </location>
</feature>
<organism evidence="9">
    <name type="scientific">Caenorhabditis elegans</name>
    <dbReference type="NCBI Taxonomy" id="6239"/>
    <lineage>
        <taxon>Eukaryota</taxon>
        <taxon>Metazoa</taxon>
        <taxon>Ecdysozoa</taxon>
        <taxon>Nematoda</taxon>
        <taxon>Chromadorea</taxon>
        <taxon>Rhabditida</taxon>
        <taxon>Rhabditina</taxon>
        <taxon>Rhabditomorpha</taxon>
        <taxon>Rhabditoidea</taxon>
        <taxon>Rhabditidae</taxon>
        <taxon>Peloderinae</taxon>
        <taxon>Caenorhabditis</taxon>
    </lineage>
</organism>
<gene>
    <name evidence="10" type="primary">gcy-13</name>
    <name evidence="10" type="ORF">F23H12.6</name>
</gene>
<sequence>MASSVGWQTSASAIEIAMDRIKSEHLIDNIGINFIYVFDDCNEAKAAGLSSKLLMDANVSAIVGPTCNAAGLAVVNLAGYYNTPVLTWGLTISSSFIDTSKYPTTVTIVPVAKSIAAAIHEVMIQFEWTEFVYVFVEDEKCGYFRDDLEQITSDSNYTSLSRTIQIYDQSYTNLVRQLEKLKTVSRIFTVCLPEAGDIKRRFMLAAYDLDMTTDEYVYLFAGPKSTAYQQTSSTGDVVGIWVDWSENPDGRDEEAKLAFMRTMVIVATPVQGEQYAAFKKEVIERMKLPPYNCVDECKEKEYQEAAEYADQLHDTIYLYALILNKTIEEQGIEQIANGSNIVTRGAGIEFEGMSGVVRMNGIGYRLPNMNLANLDSNATQRTVAYMDIDSTSVNWTFAIIDQALIWDAYNGKLPQTRPECGYSGKSCPVNFFVDYLYIVVIVAVIIVLCCAAAAIAAFLVIKARRDEELRLDDQWIVPHGMLQSIIKGRKESHHSSRSLQSNSTTTTGTTGISSRSVFFPETETQGYFVYMNEPVLARKYQLRVPIFKQDRSELRMLRSIEHDNVNRFIGLSIDGPVYMSFWRYCSRGSIKDVIAKSSINMDGFFIYCLIKDIASGLQYIHHSPIKQHGSLTSECCYINDRWQVKIGSYGLSFMQGVEKRTEDGLLHTAPEVLREGLTSGTQAGDVYSFSIVCSELVGHSSAWNLENRKEEADEIIFMVKRGGRTPFRPSLDDVDDDINPAMLHLIRDCWDEDPKQRPNIDMVNKLMKNMNSGRSGSANLMDHVFSVLEKHASSLEDEVQERMKELVEEKKKSDILLYRMLPQQVAERLKLGQSVEPEAFESVTIFFSDVVGFTVLANKSTPLQVVNLLNDLYTTFDAIIEKNDSYKVETIGDAYLVVSGLPRRNGTEHVANIANMSLELMDSLQAFKIPHLPQEKVQIRIGMHSGSCVAGVVGLTMPRYCLFGDTVNTASRMESNGKPGFIHLSSDCYDLLTSLYKEYNTESRGEVIIKGKGVMQTYWLLGMKEESA</sequence>
<protein>
    <recommendedName>
        <fullName evidence="8">Receptor-type guanylate cyclase gcy-13</fullName>
        <ecNumber evidence="1">4.6.1.2</ecNumber>
    </recommendedName>
</protein>
<proteinExistence type="evidence at transcript level"/>